<feature type="chain" id="PRO_0000227119" description="Glycine dehydrogenase (decarboxylating) 2">
    <location>
        <begin position="1"/>
        <end position="957"/>
    </location>
</feature>
<feature type="modified residue" description="N6-(pyridoxal phosphate)lysine" evidence="1">
    <location>
        <position position="707"/>
    </location>
</feature>
<gene>
    <name evidence="1" type="primary">gcvP2</name>
    <name type="ordered locus">Pfl01_5426</name>
</gene>
<comment type="function">
    <text evidence="1">The glycine cleavage system catalyzes the degradation of glycine. The P protein binds the alpha-amino group of glycine through its pyridoxal phosphate cofactor; CO(2) is released and the remaining methylamine moiety is then transferred to the lipoamide cofactor of the H protein.</text>
</comment>
<comment type="catalytic activity">
    <reaction evidence="1">
        <text>N(6)-[(R)-lipoyl]-L-lysyl-[glycine-cleavage complex H protein] + glycine + H(+) = N(6)-[(R)-S(8)-aminomethyldihydrolipoyl]-L-lysyl-[glycine-cleavage complex H protein] + CO2</text>
        <dbReference type="Rhea" id="RHEA:24304"/>
        <dbReference type="Rhea" id="RHEA-COMP:10494"/>
        <dbReference type="Rhea" id="RHEA-COMP:10495"/>
        <dbReference type="ChEBI" id="CHEBI:15378"/>
        <dbReference type="ChEBI" id="CHEBI:16526"/>
        <dbReference type="ChEBI" id="CHEBI:57305"/>
        <dbReference type="ChEBI" id="CHEBI:83099"/>
        <dbReference type="ChEBI" id="CHEBI:83143"/>
        <dbReference type="EC" id="1.4.4.2"/>
    </reaction>
</comment>
<comment type="cofactor">
    <cofactor evidence="1">
        <name>pyridoxal 5'-phosphate</name>
        <dbReference type="ChEBI" id="CHEBI:597326"/>
    </cofactor>
</comment>
<comment type="subunit">
    <text evidence="1">The glycine cleavage system is composed of four proteins: P, T, L and H.</text>
</comment>
<comment type="similarity">
    <text evidence="1">Belongs to the GcvP family.</text>
</comment>
<name>GCSP2_PSEPF</name>
<organism>
    <name type="scientific">Pseudomonas fluorescens (strain Pf0-1)</name>
    <dbReference type="NCBI Taxonomy" id="205922"/>
    <lineage>
        <taxon>Bacteria</taxon>
        <taxon>Pseudomonadati</taxon>
        <taxon>Pseudomonadota</taxon>
        <taxon>Gammaproteobacteria</taxon>
        <taxon>Pseudomonadales</taxon>
        <taxon>Pseudomonadaceae</taxon>
        <taxon>Pseudomonas</taxon>
    </lineage>
</organism>
<dbReference type="EC" id="1.4.4.2" evidence="1"/>
<dbReference type="EMBL" id="CP000094">
    <property type="protein sequence ID" value="ABA77163.1"/>
    <property type="molecule type" value="Genomic_DNA"/>
</dbReference>
<dbReference type="RefSeq" id="WP_011336463.1">
    <property type="nucleotide sequence ID" value="NC_007492.2"/>
</dbReference>
<dbReference type="SMR" id="Q3K4Z1"/>
<dbReference type="KEGG" id="pfo:Pfl01_5426"/>
<dbReference type="eggNOG" id="COG0403">
    <property type="taxonomic scope" value="Bacteria"/>
</dbReference>
<dbReference type="eggNOG" id="COG1003">
    <property type="taxonomic scope" value="Bacteria"/>
</dbReference>
<dbReference type="HOGENOM" id="CLU_004620_1_1_6"/>
<dbReference type="Proteomes" id="UP000002704">
    <property type="component" value="Chromosome"/>
</dbReference>
<dbReference type="GO" id="GO:0005829">
    <property type="term" value="C:cytosol"/>
    <property type="evidence" value="ECO:0007669"/>
    <property type="project" value="TreeGrafter"/>
</dbReference>
<dbReference type="GO" id="GO:0005960">
    <property type="term" value="C:glycine cleavage complex"/>
    <property type="evidence" value="ECO:0007669"/>
    <property type="project" value="TreeGrafter"/>
</dbReference>
<dbReference type="GO" id="GO:0016594">
    <property type="term" value="F:glycine binding"/>
    <property type="evidence" value="ECO:0007669"/>
    <property type="project" value="TreeGrafter"/>
</dbReference>
<dbReference type="GO" id="GO:0004375">
    <property type="term" value="F:glycine dehydrogenase (decarboxylating) activity"/>
    <property type="evidence" value="ECO:0007669"/>
    <property type="project" value="UniProtKB-EC"/>
</dbReference>
<dbReference type="GO" id="GO:0030170">
    <property type="term" value="F:pyridoxal phosphate binding"/>
    <property type="evidence" value="ECO:0007669"/>
    <property type="project" value="TreeGrafter"/>
</dbReference>
<dbReference type="GO" id="GO:0019464">
    <property type="term" value="P:glycine decarboxylation via glycine cleavage system"/>
    <property type="evidence" value="ECO:0007669"/>
    <property type="project" value="UniProtKB-UniRule"/>
</dbReference>
<dbReference type="CDD" id="cd00613">
    <property type="entry name" value="GDC-P"/>
    <property type="match status" value="2"/>
</dbReference>
<dbReference type="FunFam" id="3.40.640.10:FF:000005">
    <property type="entry name" value="Glycine dehydrogenase (decarboxylating), mitochondrial"/>
    <property type="match status" value="1"/>
</dbReference>
<dbReference type="FunFam" id="3.90.1150.10:FF:000007">
    <property type="entry name" value="Glycine dehydrogenase (decarboxylating), mitochondrial"/>
    <property type="match status" value="1"/>
</dbReference>
<dbReference type="FunFam" id="3.40.640.10:FF:000007">
    <property type="entry name" value="glycine dehydrogenase (Decarboxylating), mitochondrial"/>
    <property type="match status" value="1"/>
</dbReference>
<dbReference type="Gene3D" id="3.90.1150.10">
    <property type="entry name" value="Aspartate Aminotransferase, domain 1"/>
    <property type="match status" value="1"/>
</dbReference>
<dbReference type="Gene3D" id="3.40.640.10">
    <property type="entry name" value="Type I PLP-dependent aspartate aminotransferase-like (Major domain)"/>
    <property type="match status" value="2"/>
</dbReference>
<dbReference type="HAMAP" id="MF_00711">
    <property type="entry name" value="GcvP"/>
    <property type="match status" value="1"/>
</dbReference>
<dbReference type="InterPro" id="IPR003437">
    <property type="entry name" value="GcvP"/>
</dbReference>
<dbReference type="InterPro" id="IPR049316">
    <property type="entry name" value="GDC-P_C"/>
</dbReference>
<dbReference type="InterPro" id="IPR049315">
    <property type="entry name" value="GDC-P_N"/>
</dbReference>
<dbReference type="InterPro" id="IPR020581">
    <property type="entry name" value="GDC_P"/>
</dbReference>
<dbReference type="InterPro" id="IPR015424">
    <property type="entry name" value="PyrdxlP-dep_Trfase"/>
</dbReference>
<dbReference type="InterPro" id="IPR015421">
    <property type="entry name" value="PyrdxlP-dep_Trfase_major"/>
</dbReference>
<dbReference type="InterPro" id="IPR015422">
    <property type="entry name" value="PyrdxlP-dep_Trfase_small"/>
</dbReference>
<dbReference type="NCBIfam" id="TIGR00461">
    <property type="entry name" value="gcvP"/>
    <property type="match status" value="1"/>
</dbReference>
<dbReference type="PANTHER" id="PTHR11773:SF13">
    <property type="entry name" value="GLYCINE DEHYDROGENASE (DECARBOXYLATING)"/>
    <property type="match status" value="1"/>
</dbReference>
<dbReference type="PANTHER" id="PTHR11773">
    <property type="entry name" value="GLYCINE DEHYDROGENASE, DECARBOXYLATING"/>
    <property type="match status" value="1"/>
</dbReference>
<dbReference type="Pfam" id="PF21478">
    <property type="entry name" value="GcvP2_C"/>
    <property type="match status" value="1"/>
</dbReference>
<dbReference type="Pfam" id="PF02347">
    <property type="entry name" value="GDC-P"/>
    <property type="match status" value="2"/>
</dbReference>
<dbReference type="SUPFAM" id="SSF53383">
    <property type="entry name" value="PLP-dependent transferases"/>
    <property type="match status" value="2"/>
</dbReference>
<protein>
    <recommendedName>
        <fullName evidence="1">Glycine dehydrogenase (decarboxylating) 2</fullName>
        <ecNumber evidence="1">1.4.4.2</ecNumber>
    </recommendedName>
    <alternativeName>
        <fullName evidence="1">Glycine cleavage system P-protein 2</fullName>
    </alternativeName>
    <alternativeName>
        <fullName evidence="1">Glycine decarboxylase 2</fullName>
    </alternativeName>
    <alternativeName>
        <fullName evidence="1">Glycine dehydrogenase (aminomethyl-transferring) 2</fullName>
    </alternativeName>
</protein>
<sequence length="957" mass="104242">MSQLPSLSQLRDPHAFLRRHLGPDAAEQQAMLDSLGLGSRVELIEQTVPPGIRLNRELDLPPALDEQAALARLRGYAEQNQVWTSLIGMGYHGTLTPTVILRNVLENPGWYTAYTPYQPEIAQGRLEALLNFQQLTIDLTGLELANASLLDEATAAAEAMALAKRVAKSKSNLFFVDENCHPQTISVVQTRAEGFGFELIVDAVDNLKQHQVFGALLQYPDTHGEIRDLRPLIDHLHAQQALACVAADLLSLLLLTPPGELGADVVFGSSQRFGVPMGYGGPHAAVFASREEYKRAIPGRIIGVSKDARGNVALRMALQTREQHIRREKANSNICTAQVLLANIASFYAVYHGPEGLKRIAQRVHRLTCILAAGLERHGIQRLNQHFFDTLTLDVGGAQTAIIESAQAAQINLRILGRGQLGLSLDEACDENTVARLFDVLLGADHGLSIDDLDAETLASGIPEMLQRSTSYLRHPVFNAHHSETEMLRYLKQLENKDLALNQSMIPLGSCTMKLNATSEMIPITWPQFANLHPFVPREQAVGYTLMIEELERWLCAITGFDAICMQPNSGAQGEYAGLLAIRKYHESRQQGGRDICLIPSSAHGTNPASAQMAGMRVVIVECDDAGNVDLEDLKAKASEAGAKLSCLMATYPSTHGVYEEGISEICEVIHKHGGQVYMDGANLNAQVGLARPADIGADVSHMNLHKTFCIPHGGGGPGMGPIGVRAHLAPFVANHPVVPIDGPQPQNGAVSAAPWGSASILPISWMYIAMMGPQLADASEVAILAANYLAQHLSGAFPVLYTGRNERVAHECILDLRPLKAATGISEEDVAKRLMDYGFHAPTMSFPVPGTLMVEPTESESKAELDRFIGAMLSIRAEITEVQNGNWPAEDNPLKRAPHTMADITGVWERPYSIEQGITPDAHTKAHKYWPAVNRVDNVYGDRNLFCACVPVDDYR</sequence>
<reference key="1">
    <citation type="journal article" date="2009" name="Genome Biol.">
        <title>Genomic and genetic analyses of diversity and plant interactions of Pseudomonas fluorescens.</title>
        <authorList>
            <person name="Silby M.W."/>
            <person name="Cerdeno-Tarraga A.M."/>
            <person name="Vernikos G.S."/>
            <person name="Giddens S.R."/>
            <person name="Jackson R.W."/>
            <person name="Preston G.M."/>
            <person name="Zhang X.-X."/>
            <person name="Moon C.D."/>
            <person name="Gehrig S.M."/>
            <person name="Godfrey S.A.C."/>
            <person name="Knight C.G."/>
            <person name="Malone J.G."/>
            <person name="Robinson Z."/>
            <person name="Spiers A.J."/>
            <person name="Harris S."/>
            <person name="Challis G.L."/>
            <person name="Yaxley A.M."/>
            <person name="Harris D."/>
            <person name="Seeger K."/>
            <person name="Murphy L."/>
            <person name="Rutter S."/>
            <person name="Squares R."/>
            <person name="Quail M.A."/>
            <person name="Saunders E."/>
            <person name="Mavromatis K."/>
            <person name="Brettin T.S."/>
            <person name="Bentley S.D."/>
            <person name="Hothersall J."/>
            <person name="Stephens E."/>
            <person name="Thomas C.M."/>
            <person name="Parkhill J."/>
            <person name="Levy S.B."/>
            <person name="Rainey P.B."/>
            <person name="Thomson N.R."/>
        </authorList>
    </citation>
    <scope>NUCLEOTIDE SEQUENCE [LARGE SCALE GENOMIC DNA]</scope>
    <source>
        <strain>Pf0-1</strain>
    </source>
</reference>
<accession>Q3K4Z1</accession>
<proteinExistence type="inferred from homology"/>
<keyword id="KW-0560">Oxidoreductase</keyword>
<keyword id="KW-0663">Pyridoxal phosphate</keyword>
<evidence type="ECO:0000255" key="1">
    <source>
        <dbReference type="HAMAP-Rule" id="MF_00711"/>
    </source>
</evidence>